<organism>
    <name type="scientific">Pleurastrum terricola</name>
    <name type="common">Filamentous green alga</name>
    <name type="synonym">Leptosira terrestris</name>
    <dbReference type="NCBI Taxonomy" id="34116"/>
    <lineage>
        <taxon>Eukaryota</taxon>
        <taxon>Viridiplantae</taxon>
        <taxon>Chlorophyta</taxon>
        <taxon>core chlorophytes</taxon>
        <taxon>Chlorophyceae</taxon>
        <taxon>CS clade</taxon>
        <taxon>Chlamydomonadales</taxon>
        <taxon>Pleurastraceae</taxon>
        <taxon>Pleurastrum</taxon>
    </lineage>
</organism>
<feature type="chain" id="PRO_0000345592" description="Small ribosomal subunit protein bS18c">
    <location>
        <begin position="1"/>
        <end position="100"/>
    </location>
</feature>
<evidence type="ECO:0000255" key="1">
    <source>
        <dbReference type="HAMAP-Rule" id="MF_00270"/>
    </source>
</evidence>
<evidence type="ECO:0000305" key="2"/>
<comment type="subunit">
    <text evidence="1">Part of the 30S ribosomal subunit.</text>
</comment>
<comment type="subcellular location">
    <subcellularLocation>
        <location>Plastid</location>
        <location>Chloroplast</location>
    </subcellularLocation>
</comment>
<comment type="similarity">
    <text evidence="1">Belongs to the bacterial ribosomal protein bS18 family.</text>
</comment>
<reference key="1">
    <citation type="journal article" date="2007" name="BMC Genomics">
        <title>The chloroplast genome sequence of the green alga Leptosira terrestris: multiple losses of the inverted repeat and extensive genome rearrangements within the Trebouxiophyceae.</title>
        <authorList>
            <person name="de Cambiaire J.-C."/>
            <person name="Otis C."/>
            <person name="Turmel M."/>
            <person name="Lemieux C."/>
        </authorList>
    </citation>
    <scope>NUCLEOTIDE SEQUENCE [LARGE SCALE GENOMIC DNA]</scope>
    <source>
        <strain>CCAP 463/2 / UTEX 333</strain>
    </source>
</reference>
<dbReference type="EMBL" id="EF506945">
    <property type="protein sequence ID" value="ABO69316.1"/>
    <property type="molecule type" value="Genomic_DNA"/>
</dbReference>
<dbReference type="RefSeq" id="YP_001382177.1">
    <property type="nucleotide sequence ID" value="NC_009681.1"/>
</dbReference>
<dbReference type="SMR" id="A6YGA0"/>
<dbReference type="GeneID" id="5383817"/>
<dbReference type="GO" id="GO:0009507">
    <property type="term" value="C:chloroplast"/>
    <property type="evidence" value="ECO:0007669"/>
    <property type="project" value="UniProtKB-SubCell"/>
</dbReference>
<dbReference type="GO" id="GO:0022627">
    <property type="term" value="C:cytosolic small ribosomal subunit"/>
    <property type="evidence" value="ECO:0007669"/>
    <property type="project" value="TreeGrafter"/>
</dbReference>
<dbReference type="GO" id="GO:0070181">
    <property type="term" value="F:small ribosomal subunit rRNA binding"/>
    <property type="evidence" value="ECO:0007669"/>
    <property type="project" value="TreeGrafter"/>
</dbReference>
<dbReference type="GO" id="GO:0003735">
    <property type="term" value="F:structural constituent of ribosome"/>
    <property type="evidence" value="ECO:0007669"/>
    <property type="project" value="InterPro"/>
</dbReference>
<dbReference type="GO" id="GO:0006412">
    <property type="term" value="P:translation"/>
    <property type="evidence" value="ECO:0007669"/>
    <property type="project" value="UniProtKB-UniRule"/>
</dbReference>
<dbReference type="Gene3D" id="4.10.640.10">
    <property type="entry name" value="Ribosomal protein S18"/>
    <property type="match status" value="1"/>
</dbReference>
<dbReference type="HAMAP" id="MF_00270">
    <property type="entry name" value="Ribosomal_bS18"/>
    <property type="match status" value="1"/>
</dbReference>
<dbReference type="InterPro" id="IPR001648">
    <property type="entry name" value="Ribosomal_bS18"/>
</dbReference>
<dbReference type="InterPro" id="IPR036870">
    <property type="entry name" value="Ribosomal_bS18_sf"/>
</dbReference>
<dbReference type="NCBIfam" id="TIGR00165">
    <property type="entry name" value="S18"/>
    <property type="match status" value="1"/>
</dbReference>
<dbReference type="PANTHER" id="PTHR13479">
    <property type="entry name" value="30S RIBOSOMAL PROTEIN S18"/>
    <property type="match status" value="1"/>
</dbReference>
<dbReference type="PANTHER" id="PTHR13479:SF40">
    <property type="entry name" value="SMALL RIBOSOMAL SUBUNIT PROTEIN BS18M"/>
    <property type="match status" value="1"/>
</dbReference>
<dbReference type="Pfam" id="PF01084">
    <property type="entry name" value="Ribosomal_S18"/>
    <property type="match status" value="1"/>
</dbReference>
<dbReference type="PRINTS" id="PR00974">
    <property type="entry name" value="RIBOSOMALS18"/>
</dbReference>
<dbReference type="SUPFAM" id="SSF46911">
    <property type="entry name" value="Ribosomal protein S18"/>
    <property type="match status" value="1"/>
</dbReference>
<sequence length="100" mass="11639">MKQPLKNTKRSNYKRKKRERVIALIPTKTNLTSPDKSLTPLPKEIIDYKNVILLRNGITAEGKIFPRRFTKLNAKQQRYMSKAIKNARMVGLLPFVKKSK</sequence>
<geneLocation type="chloroplast"/>
<gene>
    <name evidence="1" type="primary">rps18</name>
</gene>
<name>RR18_PLETE</name>
<keyword id="KW-0150">Chloroplast</keyword>
<keyword id="KW-0934">Plastid</keyword>
<keyword id="KW-0687">Ribonucleoprotein</keyword>
<keyword id="KW-0689">Ribosomal protein</keyword>
<keyword id="KW-0694">RNA-binding</keyword>
<keyword id="KW-0699">rRNA-binding</keyword>
<accession>A6YGA0</accession>
<proteinExistence type="inferred from homology"/>
<protein>
    <recommendedName>
        <fullName evidence="1">Small ribosomal subunit protein bS18c</fullName>
    </recommendedName>
    <alternativeName>
        <fullName evidence="2">30S ribosomal protein S18, chloroplastic</fullName>
    </alternativeName>
</protein>